<organism>
    <name type="scientific">Escherichia coli O6:K15:H31 (strain 536 / UPEC)</name>
    <dbReference type="NCBI Taxonomy" id="362663"/>
    <lineage>
        <taxon>Bacteria</taxon>
        <taxon>Pseudomonadati</taxon>
        <taxon>Pseudomonadota</taxon>
        <taxon>Gammaproteobacteria</taxon>
        <taxon>Enterobacterales</taxon>
        <taxon>Enterobacteriaceae</taxon>
        <taxon>Escherichia</taxon>
    </lineage>
</organism>
<feature type="chain" id="PRO_0000311785" description="Uncharacterized protein YciY">
    <location>
        <begin position="1"/>
        <end position="57"/>
    </location>
</feature>
<feature type="region of interest" description="Disordered" evidence="1">
    <location>
        <begin position="1"/>
        <end position="25"/>
    </location>
</feature>
<feature type="compositionally biased region" description="Basic and acidic residues" evidence="1">
    <location>
        <begin position="1"/>
        <end position="10"/>
    </location>
</feature>
<gene>
    <name type="primary">yciY</name>
    <name type="ordered locus">ECP_1297</name>
</gene>
<accession>Q0TIC1</accession>
<sequence>MKRSRTEVGRWRMQRQASRRKSRWLEGQSRRNMRIHSIRKCILNKQRNSLLFAIYNI</sequence>
<dbReference type="EMBL" id="CP000247">
    <property type="protein sequence ID" value="ABG69308.1"/>
    <property type="status" value="ALT_INIT"/>
    <property type="molecule type" value="Genomic_DNA"/>
</dbReference>
<dbReference type="RefSeq" id="WP_001309467.1">
    <property type="nucleotide sequence ID" value="NC_008253.1"/>
</dbReference>
<dbReference type="KEGG" id="ecp:ECP_1297"/>
<dbReference type="HOGENOM" id="CLU_201868_0_0_6"/>
<dbReference type="Proteomes" id="UP000009182">
    <property type="component" value="Chromosome"/>
</dbReference>
<dbReference type="InterPro" id="IPR049586">
    <property type="entry name" value="YciY"/>
</dbReference>
<dbReference type="NCBIfam" id="NF033701">
    <property type="entry name" value="yciY_fam"/>
    <property type="match status" value="1"/>
</dbReference>
<reference key="1">
    <citation type="journal article" date="2006" name="Mol. Microbiol.">
        <title>Role of pathogenicity island-associated integrases in the genome plasticity of uropathogenic Escherichia coli strain 536.</title>
        <authorList>
            <person name="Hochhut B."/>
            <person name="Wilde C."/>
            <person name="Balling G."/>
            <person name="Middendorf B."/>
            <person name="Dobrindt U."/>
            <person name="Brzuszkiewicz E."/>
            <person name="Gottschalk G."/>
            <person name="Carniel E."/>
            <person name="Hacker J."/>
        </authorList>
    </citation>
    <scope>NUCLEOTIDE SEQUENCE [LARGE SCALE GENOMIC DNA]</scope>
    <source>
        <strain>536 / UPEC</strain>
    </source>
</reference>
<comment type="similarity">
    <text evidence="2">Belongs to the YciY family.</text>
</comment>
<comment type="sequence caution" evidence="2">
    <conflict type="erroneous initiation">
        <sequence resource="EMBL-CDS" id="ABG69308"/>
    </conflict>
</comment>
<proteinExistence type="inferred from homology"/>
<evidence type="ECO:0000256" key="1">
    <source>
        <dbReference type="SAM" id="MobiDB-lite"/>
    </source>
</evidence>
<evidence type="ECO:0000305" key="2"/>
<name>YCIY_ECOL5</name>
<protein>
    <recommendedName>
        <fullName>Uncharacterized protein YciY</fullName>
    </recommendedName>
</protein>